<accession>B7UQI6</accession>
<feature type="chain" id="PRO_1000194753" description="Adenylosuccinate synthetase">
    <location>
        <begin position="1"/>
        <end position="432"/>
    </location>
</feature>
<feature type="active site" description="Proton acceptor" evidence="1">
    <location>
        <position position="14"/>
    </location>
</feature>
<feature type="active site" description="Proton donor" evidence="1">
    <location>
        <position position="42"/>
    </location>
</feature>
<feature type="binding site" evidence="1">
    <location>
        <begin position="13"/>
        <end position="19"/>
    </location>
    <ligand>
        <name>GTP</name>
        <dbReference type="ChEBI" id="CHEBI:37565"/>
    </ligand>
</feature>
<feature type="binding site" description="in other chain" evidence="1">
    <location>
        <begin position="14"/>
        <end position="17"/>
    </location>
    <ligand>
        <name>IMP</name>
        <dbReference type="ChEBI" id="CHEBI:58053"/>
        <note>ligand shared between dimeric partners</note>
    </ligand>
</feature>
<feature type="binding site" evidence="1">
    <location>
        <position position="14"/>
    </location>
    <ligand>
        <name>Mg(2+)</name>
        <dbReference type="ChEBI" id="CHEBI:18420"/>
    </ligand>
</feature>
<feature type="binding site" description="in other chain" evidence="1">
    <location>
        <begin position="39"/>
        <end position="42"/>
    </location>
    <ligand>
        <name>IMP</name>
        <dbReference type="ChEBI" id="CHEBI:58053"/>
        <note>ligand shared between dimeric partners</note>
    </ligand>
</feature>
<feature type="binding site" evidence="1">
    <location>
        <begin position="41"/>
        <end position="43"/>
    </location>
    <ligand>
        <name>GTP</name>
        <dbReference type="ChEBI" id="CHEBI:37565"/>
    </ligand>
</feature>
<feature type="binding site" evidence="1">
    <location>
        <position position="41"/>
    </location>
    <ligand>
        <name>Mg(2+)</name>
        <dbReference type="ChEBI" id="CHEBI:18420"/>
    </ligand>
</feature>
<feature type="binding site" description="in other chain" evidence="1">
    <location>
        <position position="130"/>
    </location>
    <ligand>
        <name>IMP</name>
        <dbReference type="ChEBI" id="CHEBI:58053"/>
        <note>ligand shared between dimeric partners</note>
    </ligand>
</feature>
<feature type="binding site" evidence="1">
    <location>
        <position position="144"/>
    </location>
    <ligand>
        <name>IMP</name>
        <dbReference type="ChEBI" id="CHEBI:58053"/>
        <note>ligand shared between dimeric partners</note>
    </ligand>
</feature>
<feature type="binding site" description="in other chain" evidence="1">
    <location>
        <position position="225"/>
    </location>
    <ligand>
        <name>IMP</name>
        <dbReference type="ChEBI" id="CHEBI:58053"/>
        <note>ligand shared between dimeric partners</note>
    </ligand>
</feature>
<feature type="binding site" description="in other chain" evidence="1">
    <location>
        <position position="240"/>
    </location>
    <ligand>
        <name>IMP</name>
        <dbReference type="ChEBI" id="CHEBI:58053"/>
        <note>ligand shared between dimeric partners</note>
    </ligand>
</feature>
<feature type="binding site" evidence="1">
    <location>
        <begin position="300"/>
        <end position="306"/>
    </location>
    <ligand>
        <name>substrate</name>
    </ligand>
</feature>
<feature type="binding site" description="in other chain" evidence="1">
    <location>
        <position position="304"/>
    </location>
    <ligand>
        <name>IMP</name>
        <dbReference type="ChEBI" id="CHEBI:58053"/>
        <note>ligand shared between dimeric partners</note>
    </ligand>
</feature>
<feature type="binding site" evidence="1">
    <location>
        <position position="306"/>
    </location>
    <ligand>
        <name>GTP</name>
        <dbReference type="ChEBI" id="CHEBI:37565"/>
    </ligand>
</feature>
<feature type="binding site" evidence="1">
    <location>
        <begin position="332"/>
        <end position="334"/>
    </location>
    <ligand>
        <name>GTP</name>
        <dbReference type="ChEBI" id="CHEBI:37565"/>
    </ligand>
</feature>
<feature type="binding site" evidence="1">
    <location>
        <begin position="415"/>
        <end position="417"/>
    </location>
    <ligand>
        <name>GTP</name>
        <dbReference type="ChEBI" id="CHEBI:37565"/>
    </ligand>
</feature>
<sequence>MGNNVVVLGTQWGDEGKGKIVDLLTERAKYVVRYQGGHNAGHTLVINGEKTVLHLIPSGILRENVTSIIGNGVVLSPAALMKEMKELEDRGIPVRERLLLSEACPLILDYHVALDNAREKARGAKAIGTTGRGIGPAYEDKVARRGLRVGDLFDKETFAEKLKEVMEYHNFQLVNYYKAEAVDYQKVLDDTMAVADILTSMVVDVSDLLDQARQRGDFVMFEGAQGTLLDIDHGTYPYVTSSNTTAGGVATGSGLGPRYVDYVLGILKAYSTRVGAGPFPTELFDETGEFLCKQGNEFGATTGRRRRTGWLDTVAVRRAVQLNSLSGFCLTKLDVLDGLKEVKLCVAYRMPDGREVTTTPLAADDWKGVEPIYETMPGWSESTFGVKDRSGLPQAALNYIKRIEELTGVPIDIISTGPDRTETMILRDPFDA</sequence>
<proteinExistence type="inferred from homology"/>
<evidence type="ECO:0000255" key="1">
    <source>
        <dbReference type="HAMAP-Rule" id="MF_00011"/>
    </source>
</evidence>
<gene>
    <name evidence="1" type="primary">purA</name>
    <name type="ordered locus">E2348C_4500</name>
</gene>
<reference key="1">
    <citation type="journal article" date="2009" name="J. Bacteriol.">
        <title>Complete genome sequence and comparative genome analysis of enteropathogenic Escherichia coli O127:H6 strain E2348/69.</title>
        <authorList>
            <person name="Iguchi A."/>
            <person name="Thomson N.R."/>
            <person name="Ogura Y."/>
            <person name="Saunders D."/>
            <person name="Ooka T."/>
            <person name="Henderson I.R."/>
            <person name="Harris D."/>
            <person name="Asadulghani M."/>
            <person name="Kurokawa K."/>
            <person name="Dean P."/>
            <person name="Kenny B."/>
            <person name="Quail M.A."/>
            <person name="Thurston S."/>
            <person name="Dougan G."/>
            <person name="Hayashi T."/>
            <person name="Parkhill J."/>
            <person name="Frankel G."/>
        </authorList>
    </citation>
    <scope>NUCLEOTIDE SEQUENCE [LARGE SCALE GENOMIC DNA]</scope>
    <source>
        <strain>E2348/69 / EPEC</strain>
    </source>
</reference>
<keyword id="KW-0963">Cytoplasm</keyword>
<keyword id="KW-0342">GTP-binding</keyword>
<keyword id="KW-0436">Ligase</keyword>
<keyword id="KW-0460">Magnesium</keyword>
<keyword id="KW-0479">Metal-binding</keyword>
<keyword id="KW-0547">Nucleotide-binding</keyword>
<keyword id="KW-0658">Purine biosynthesis</keyword>
<keyword id="KW-1185">Reference proteome</keyword>
<name>PURA_ECO27</name>
<comment type="function">
    <text evidence="1">Plays an important role in the de novo pathway of purine nucleotide biosynthesis. Catalyzes the first committed step in the biosynthesis of AMP from IMP.</text>
</comment>
<comment type="catalytic activity">
    <reaction evidence="1">
        <text>IMP + L-aspartate + GTP = N(6)-(1,2-dicarboxyethyl)-AMP + GDP + phosphate + 2 H(+)</text>
        <dbReference type="Rhea" id="RHEA:15753"/>
        <dbReference type="ChEBI" id="CHEBI:15378"/>
        <dbReference type="ChEBI" id="CHEBI:29991"/>
        <dbReference type="ChEBI" id="CHEBI:37565"/>
        <dbReference type="ChEBI" id="CHEBI:43474"/>
        <dbReference type="ChEBI" id="CHEBI:57567"/>
        <dbReference type="ChEBI" id="CHEBI:58053"/>
        <dbReference type="ChEBI" id="CHEBI:58189"/>
        <dbReference type="EC" id="6.3.4.4"/>
    </reaction>
</comment>
<comment type="cofactor">
    <cofactor evidence="1">
        <name>Mg(2+)</name>
        <dbReference type="ChEBI" id="CHEBI:18420"/>
    </cofactor>
    <text evidence="1">Binds 1 Mg(2+) ion per subunit.</text>
</comment>
<comment type="pathway">
    <text evidence="1">Purine metabolism; AMP biosynthesis via de novo pathway; AMP from IMP: step 1/2.</text>
</comment>
<comment type="subunit">
    <text evidence="1">Homodimer.</text>
</comment>
<comment type="subcellular location">
    <subcellularLocation>
        <location evidence="1">Cytoplasm</location>
    </subcellularLocation>
</comment>
<comment type="similarity">
    <text evidence="1">Belongs to the adenylosuccinate synthetase family.</text>
</comment>
<protein>
    <recommendedName>
        <fullName evidence="1">Adenylosuccinate synthetase</fullName>
        <shortName evidence="1">AMPSase</shortName>
        <shortName evidence="1">AdSS</shortName>
        <ecNumber evidence="1">6.3.4.4</ecNumber>
    </recommendedName>
    <alternativeName>
        <fullName evidence="1">IMP--aspartate ligase</fullName>
    </alternativeName>
</protein>
<dbReference type="EC" id="6.3.4.4" evidence="1"/>
<dbReference type="EMBL" id="FM180568">
    <property type="protein sequence ID" value="CAS12048.1"/>
    <property type="molecule type" value="Genomic_DNA"/>
</dbReference>
<dbReference type="RefSeq" id="WP_000527955.1">
    <property type="nucleotide sequence ID" value="NC_011601.1"/>
</dbReference>
<dbReference type="SMR" id="B7UQI6"/>
<dbReference type="GeneID" id="75202411"/>
<dbReference type="KEGG" id="ecg:E2348C_4500"/>
<dbReference type="HOGENOM" id="CLU_029848_0_0_6"/>
<dbReference type="UniPathway" id="UPA00075">
    <property type="reaction ID" value="UER00335"/>
</dbReference>
<dbReference type="Proteomes" id="UP000008205">
    <property type="component" value="Chromosome"/>
</dbReference>
<dbReference type="GO" id="GO:0005737">
    <property type="term" value="C:cytoplasm"/>
    <property type="evidence" value="ECO:0007669"/>
    <property type="project" value="UniProtKB-SubCell"/>
</dbReference>
<dbReference type="GO" id="GO:0004019">
    <property type="term" value="F:adenylosuccinate synthase activity"/>
    <property type="evidence" value="ECO:0007669"/>
    <property type="project" value="UniProtKB-UniRule"/>
</dbReference>
<dbReference type="GO" id="GO:0005525">
    <property type="term" value="F:GTP binding"/>
    <property type="evidence" value="ECO:0007669"/>
    <property type="project" value="UniProtKB-UniRule"/>
</dbReference>
<dbReference type="GO" id="GO:0000287">
    <property type="term" value="F:magnesium ion binding"/>
    <property type="evidence" value="ECO:0007669"/>
    <property type="project" value="UniProtKB-UniRule"/>
</dbReference>
<dbReference type="GO" id="GO:0044208">
    <property type="term" value="P:'de novo' AMP biosynthetic process"/>
    <property type="evidence" value="ECO:0007669"/>
    <property type="project" value="UniProtKB-UniRule"/>
</dbReference>
<dbReference type="GO" id="GO:0046040">
    <property type="term" value="P:IMP metabolic process"/>
    <property type="evidence" value="ECO:0007669"/>
    <property type="project" value="TreeGrafter"/>
</dbReference>
<dbReference type="CDD" id="cd03108">
    <property type="entry name" value="AdSS"/>
    <property type="match status" value="1"/>
</dbReference>
<dbReference type="FunFam" id="1.10.300.10:FF:000001">
    <property type="entry name" value="Adenylosuccinate synthetase"/>
    <property type="match status" value="1"/>
</dbReference>
<dbReference type="FunFam" id="3.90.170.10:FF:000001">
    <property type="entry name" value="Adenylosuccinate synthetase"/>
    <property type="match status" value="1"/>
</dbReference>
<dbReference type="Gene3D" id="3.40.440.10">
    <property type="entry name" value="Adenylosuccinate Synthetase, subunit A, domain 1"/>
    <property type="match status" value="1"/>
</dbReference>
<dbReference type="Gene3D" id="1.10.300.10">
    <property type="entry name" value="Adenylosuccinate Synthetase, subunit A, domain 2"/>
    <property type="match status" value="1"/>
</dbReference>
<dbReference type="Gene3D" id="3.90.170.10">
    <property type="entry name" value="Adenylosuccinate Synthetase, subunit A, domain 3"/>
    <property type="match status" value="1"/>
</dbReference>
<dbReference type="HAMAP" id="MF_00011">
    <property type="entry name" value="Adenylosucc_synth"/>
    <property type="match status" value="1"/>
</dbReference>
<dbReference type="InterPro" id="IPR018220">
    <property type="entry name" value="Adenylosuccin_syn_GTP-bd"/>
</dbReference>
<dbReference type="InterPro" id="IPR033128">
    <property type="entry name" value="Adenylosuccin_syn_Lys_AS"/>
</dbReference>
<dbReference type="InterPro" id="IPR042109">
    <property type="entry name" value="Adenylosuccinate_synth_dom1"/>
</dbReference>
<dbReference type="InterPro" id="IPR042110">
    <property type="entry name" value="Adenylosuccinate_synth_dom2"/>
</dbReference>
<dbReference type="InterPro" id="IPR042111">
    <property type="entry name" value="Adenylosuccinate_synth_dom3"/>
</dbReference>
<dbReference type="InterPro" id="IPR001114">
    <property type="entry name" value="Adenylosuccinate_synthetase"/>
</dbReference>
<dbReference type="InterPro" id="IPR027417">
    <property type="entry name" value="P-loop_NTPase"/>
</dbReference>
<dbReference type="NCBIfam" id="NF002223">
    <property type="entry name" value="PRK01117.1"/>
    <property type="match status" value="1"/>
</dbReference>
<dbReference type="NCBIfam" id="TIGR00184">
    <property type="entry name" value="purA"/>
    <property type="match status" value="1"/>
</dbReference>
<dbReference type="PANTHER" id="PTHR11846">
    <property type="entry name" value="ADENYLOSUCCINATE SYNTHETASE"/>
    <property type="match status" value="1"/>
</dbReference>
<dbReference type="PANTHER" id="PTHR11846:SF0">
    <property type="entry name" value="ADENYLOSUCCINATE SYNTHETASE"/>
    <property type="match status" value="1"/>
</dbReference>
<dbReference type="Pfam" id="PF00709">
    <property type="entry name" value="Adenylsucc_synt"/>
    <property type="match status" value="1"/>
</dbReference>
<dbReference type="SMART" id="SM00788">
    <property type="entry name" value="Adenylsucc_synt"/>
    <property type="match status" value="1"/>
</dbReference>
<dbReference type="SUPFAM" id="SSF52540">
    <property type="entry name" value="P-loop containing nucleoside triphosphate hydrolases"/>
    <property type="match status" value="1"/>
</dbReference>
<dbReference type="PROSITE" id="PS01266">
    <property type="entry name" value="ADENYLOSUCCIN_SYN_1"/>
    <property type="match status" value="1"/>
</dbReference>
<dbReference type="PROSITE" id="PS00513">
    <property type="entry name" value="ADENYLOSUCCIN_SYN_2"/>
    <property type="match status" value="1"/>
</dbReference>
<organism>
    <name type="scientific">Escherichia coli O127:H6 (strain E2348/69 / EPEC)</name>
    <dbReference type="NCBI Taxonomy" id="574521"/>
    <lineage>
        <taxon>Bacteria</taxon>
        <taxon>Pseudomonadati</taxon>
        <taxon>Pseudomonadota</taxon>
        <taxon>Gammaproteobacteria</taxon>
        <taxon>Enterobacterales</taxon>
        <taxon>Enterobacteriaceae</taxon>
        <taxon>Escherichia</taxon>
    </lineage>
</organism>